<protein>
    <recommendedName>
        <fullName evidence="1">Sec-independent protein translocase protein TatA</fullName>
    </recommendedName>
</protein>
<organism>
    <name type="scientific">Mycobacterium bovis (strain BCG / Pasteur 1173P2)</name>
    <dbReference type="NCBI Taxonomy" id="410289"/>
    <lineage>
        <taxon>Bacteria</taxon>
        <taxon>Bacillati</taxon>
        <taxon>Actinomycetota</taxon>
        <taxon>Actinomycetes</taxon>
        <taxon>Mycobacteriales</taxon>
        <taxon>Mycobacteriaceae</taxon>
        <taxon>Mycobacterium</taxon>
        <taxon>Mycobacterium tuberculosis complex</taxon>
    </lineage>
</organism>
<reference key="1">
    <citation type="journal article" date="2007" name="Proc. Natl. Acad. Sci. U.S.A.">
        <title>Genome plasticity of BCG and impact on vaccine efficacy.</title>
        <authorList>
            <person name="Brosch R."/>
            <person name="Gordon S.V."/>
            <person name="Garnier T."/>
            <person name="Eiglmeier K."/>
            <person name="Frigui W."/>
            <person name="Valenti P."/>
            <person name="Dos Santos S."/>
            <person name="Duthoy S."/>
            <person name="Lacroix C."/>
            <person name="Garcia-Pelayo C."/>
            <person name="Inwald J.K."/>
            <person name="Golby P."/>
            <person name="Garcia J.N."/>
            <person name="Hewinson R.G."/>
            <person name="Behr M.A."/>
            <person name="Quail M.A."/>
            <person name="Churcher C."/>
            <person name="Barrell B.G."/>
            <person name="Parkhill J."/>
            <person name="Cole S.T."/>
        </authorList>
    </citation>
    <scope>NUCLEOTIDE SEQUENCE [LARGE SCALE GENOMIC DNA]</scope>
    <source>
        <strain>BCG / Pasteur 1173P2</strain>
    </source>
</reference>
<comment type="function">
    <text evidence="1">Part of the twin-arginine translocation (Tat) system that transports large folded proteins containing a characteristic twin-arginine motif in their signal peptide across membranes. TatA could form the protein-conducting channel of the Tat system.</text>
</comment>
<comment type="subunit">
    <text evidence="1">The Tat system comprises two distinct complexes: a TatABC complex, containing multiple copies of TatA, TatB and TatC subunits, and a separate TatA complex, containing only TatA subunits. Substrates initially bind to the TatABC complex, which probably triggers association of the separate TatA complex to form the active translocon.</text>
</comment>
<comment type="subcellular location">
    <subcellularLocation>
        <location evidence="1">Cell membrane</location>
        <topology evidence="1">Single-pass membrane protein</topology>
    </subcellularLocation>
</comment>
<comment type="similarity">
    <text evidence="1">Belongs to the TatA/E family.</text>
</comment>
<accession>A1KKE0</accession>
<name>TATA_MYCBP</name>
<evidence type="ECO:0000255" key="1">
    <source>
        <dbReference type="HAMAP-Rule" id="MF_00236"/>
    </source>
</evidence>
<evidence type="ECO:0000256" key="2">
    <source>
        <dbReference type="SAM" id="MobiDB-lite"/>
    </source>
</evidence>
<sequence>MGSLSPWHWAILAVVVIVLFGAKKLPDAARSLGKSLRIFKSEVRELQNENKAEASIETPTPVQSQRVDPSAASGQDSTEARPA</sequence>
<dbReference type="EMBL" id="AM408590">
    <property type="protein sequence ID" value="CAL72102.1"/>
    <property type="molecule type" value="Genomic_DNA"/>
</dbReference>
<dbReference type="RefSeq" id="WP_003410768.1">
    <property type="nucleotide sequence ID" value="NC_008769.1"/>
</dbReference>
<dbReference type="SMR" id="A1KKE0"/>
<dbReference type="GeneID" id="45426071"/>
<dbReference type="KEGG" id="mbb:BCG_2114c"/>
<dbReference type="HOGENOM" id="CLU_086034_4_2_11"/>
<dbReference type="Proteomes" id="UP000001472">
    <property type="component" value="Chromosome"/>
</dbReference>
<dbReference type="GO" id="GO:0033281">
    <property type="term" value="C:TAT protein transport complex"/>
    <property type="evidence" value="ECO:0007669"/>
    <property type="project" value="UniProtKB-UniRule"/>
</dbReference>
<dbReference type="GO" id="GO:0008320">
    <property type="term" value="F:protein transmembrane transporter activity"/>
    <property type="evidence" value="ECO:0007669"/>
    <property type="project" value="UniProtKB-UniRule"/>
</dbReference>
<dbReference type="GO" id="GO:0043953">
    <property type="term" value="P:protein transport by the Tat complex"/>
    <property type="evidence" value="ECO:0007669"/>
    <property type="project" value="UniProtKB-UniRule"/>
</dbReference>
<dbReference type="Gene3D" id="1.20.5.3310">
    <property type="match status" value="1"/>
</dbReference>
<dbReference type="HAMAP" id="MF_00236">
    <property type="entry name" value="TatA_E"/>
    <property type="match status" value="1"/>
</dbReference>
<dbReference type="InterPro" id="IPR003369">
    <property type="entry name" value="TatA/B/E"/>
</dbReference>
<dbReference type="InterPro" id="IPR006312">
    <property type="entry name" value="TatA/E"/>
</dbReference>
<dbReference type="NCBIfam" id="NF001854">
    <property type="entry name" value="PRK00575.1"/>
    <property type="match status" value="1"/>
</dbReference>
<dbReference type="NCBIfam" id="TIGR01411">
    <property type="entry name" value="tatAE"/>
    <property type="match status" value="1"/>
</dbReference>
<dbReference type="PANTHER" id="PTHR42982">
    <property type="entry name" value="SEC-INDEPENDENT PROTEIN TRANSLOCASE PROTEIN TATA"/>
    <property type="match status" value="1"/>
</dbReference>
<dbReference type="PANTHER" id="PTHR42982:SF8">
    <property type="entry name" value="SEC-INDEPENDENT PROTEIN TRANSLOCASE PROTEIN TATA"/>
    <property type="match status" value="1"/>
</dbReference>
<dbReference type="Pfam" id="PF02416">
    <property type="entry name" value="TatA_B_E"/>
    <property type="match status" value="1"/>
</dbReference>
<gene>
    <name evidence="1" type="primary">tatA</name>
    <name type="ordered locus">BCG_2114c</name>
</gene>
<proteinExistence type="inferred from homology"/>
<feature type="chain" id="PRO_1000044399" description="Sec-independent protein translocase protein TatA">
    <location>
        <begin position="1"/>
        <end position="83"/>
    </location>
</feature>
<feature type="transmembrane region" description="Helical" evidence="1">
    <location>
        <begin position="1"/>
        <end position="21"/>
    </location>
</feature>
<feature type="region of interest" description="Disordered" evidence="2">
    <location>
        <begin position="48"/>
        <end position="83"/>
    </location>
</feature>
<feature type="compositionally biased region" description="Polar residues" evidence="2">
    <location>
        <begin position="57"/>
        <end position="77"/>
    </location>
</feature>
<keyword id="KW-1003">Cell membrane</keyword>
<keyword id="KW-0472">Membrane</keyword>
<keyword id="KW-0653">Protein transport</keyword>
<keyword id="KW-0811">Translocation</keyword>
<keyword id="KW-0812">Transmembrane</keyword>
<keyword id="KW-1133">Transmembrane helix</keyword>
<keyword id="KW-0813">Transport</keyword>